<dbReference type="EMBL" id="AY522329">
    <property type="status" value="NOT_ANNOTATED_CDS"/>
    <property type="molecule type" value="Genomic_DNA"/>
</dbReference>
<dbReference type="RefSeq" id="YP_009161393.1">
    <property type="nucleotide sequence ID" value="NC_027678.1"/>
</dbReference>
<dbReference type="SMR" id="P0C316"/>
<dbReference type="STRING" id="39946.P0C316"/>
<dbReference type="Proteomes" id="UP000007015">
    <property type="component" value="Chloroplast"/>
</dbReference>
<dbReference type="GO" id="GO:0009535">
    <property type="term" value="C:chloroplast thylakoid membrane"/>
    <property type="evidence" value="ECO:0007669"/>
    <property type="project" value="UniProtKB-SubCell"/>
</dbReference>
<dbReference type="GO" id="GO:0009536">
    <property type="term" value="C:plastid"/>
    <property type="evidence" value="ECO:0000305"/>
    <property type="project" value="Gramene"/>
</dbReference>
<dbReference type="GO" id="GO:0045158">
    <property type="term" value="F:electron transporter, transferring electrons within cytochrome b6/f complex of photosystem II activity"/>
    <property type="evidence" value="ECO:0007669"/>
    <property type="project" value="UniProtKB-UniRule"/>
</dbReference>
<dbReference type="GO" id="GO:0046872">
    <property type="term" value="F:metal ion binding"/>
    <property type="evidence" value="ECO:0007669"/>
    <property type="project" value="UniProtKB-KW"/>
</dbReference>
<dbReference type="GO" id="GO:0016491">
    <property type="term" value="F:oxidoreductase activity"/>
    <property type="evidence" value="ECO:0007669"/>
    <property type="project" value="InterPro"/>
</dbReference>
<dbReference type="GO" id="GO:0015979">
    <property type="term" value="P:photosynthesis"/>
    <property type="evidence" value="ECO:0007669"/>
    <property type="project" value="UniProtKB-UniRule"/>
</dbReference>
<dbReference type="GO" id="GO:0022904">
    <property type="term" value="P:respiratory electron transport chain"/>
    <property type="evidence" value="ECO:0007669"/>
    <property type="project" value="InterPro"/>
</dbReference>
<dbReference type="CDD" id="cd00284">
    <property type="entry name" value="Cytochrome_b_N"/>
    <property type="match status" value="1"/>
</dbReference>
<dbReference type="FunFam" id="1.20.810.10:FF:000001">
    <property type="entry name" value="Cytochrome b6"/>
    <property type="match status" value="1"/>
</dbReference>
<dbReference type="Gene3D" id="1.20.810.10">
    <property type="entry name" value="Cytochrome Bc1 Complex, Chain C"/>
    <property type="match status" value="1"/>
</dbReference>
<dbReference type="HAMAP" id="MF_00633">
    <property type="entry name" value="Cytb6_f_cytb6"/>
    <property type="match status" value="1"/>
</dbReference>
<dbReference type="InterPro" id="IPR005797">
    <property type="entry name" value="Cyt_b/b6_N"/>
</dbReference>
<dbReference type="InterPro" id="IPR023530">
    <property type="entry name" value="Cyt_B6_PetB"/>
</dbReference>
<dbReference type="InterPro" id="IPR027387">
    <property type="entry name" value="Cytb/b6-like_sf"/>
</dbReference>
<dbReference type="InterPro" id="IPR048259">
    <property type="entry name" value="Cytochrome_b_N_euk/bac"/>
</dbReference>
<dbReference type="InterPro" id="IPR016174">
    <property type="entry name" value="Di-haem_cyt_TM"/>
</dbReference>
<dbReference type="NCBIfam" id="NF002990">
    <property type="entry name" value="PRK03735.1"/>
    <property type="match status" value="1"/>
</dbReference>
<dbReference type="PANTHER" id="PTHR19271">
    <property type="entry name" value="CYTOCHROME B"/>
    <property type="match status" value="1"/>
</dbReference>
<dbReference type="PANTHER" id="PTHR19271:SF16">
    <property type="entry name" value="CYTOCHROME B"/>
    <property type="match status" value="1"/>
</dbReference>
<dbReference type="Pfam" id="PF00033">
    <property type="entry name" value="Cytochrome_B"/>
    <property type="match status" value="1"/>
</dbReference>
<dbReference type="PIRSF" id="PIRSF000032">
    <property type="entry name" value="Cytochrome_b6"/>
    <property type="match status" value="1"/>
</dbReference>
<dbReference type="SUPFAM" id="SSF81342">
    <property type="entry name" value="Transmembrane di-heme cytochromes"/>
    <property type="match status" value="1"/>
</dbReference>
<dbReference type="PROSITE" id="PS51002">
    <property type="entry name" value="CYTB_NTER"/>
    <property type="match status" value="1"/>
</dbReference>
<keyword id="KW-0150">Chloroplast</keyword>
<keyword id="KW-0249">Electron transport</keyword>
<keyword id="KW-0349">Heme</keyword>
<keyword id="KW-0408">Iron</keyword>
<keyword id="KW-0472">Membrane</keyword>
<keyword id="KW-0479">Metal-binding</keyword>
<keyword id="KW-0602">Photosynthesis</keyword>
<keyword id="KW-0934">Plastid</keyword>
<keyword id="KW-1185">Reference proteome</keyword>
<keyword id="KW-0793">Thylakoid</keyword>
<keyword id="KW-0812">Transmembrane</keyword>
<keyword id="KW-1133">Transmembrane helix</keyword>
<keyword id="KW-0813">Transport</keyword>
<reference key="1">
    <citation type="journal article" date="2004" name="Plant Physiol.">
        <title>A comparison of rice chloroplast genomes.</title>
        <authorList>
            <person name="Tang J."/>
            <person name="Xia H."/>
            <person name="Cao M."/>
            <person name="Zhang X."/>
            <person name="Zeng W."/>
            <person name="Hu S."/>
            <person name="Tong W."/>
            <person name="Wang J."/>
            <person name="Wang J."/>
            <person name="Yu J."/>
            <person name="Yang H."/>
            <person name="Zhu L."/>
        </authorList>
    </citation>
    <scope>NUCLEOTIDE SEQUENCE [LARGE SCALE GENOMIC DNA]</scope>
    <source>
        <strain>cv. 93-11</strain>
    </source>
</reference>
<protein>
    <recommendedName>
        <fullName evidence="1">Cytochrome b6</fullName>
    </recommendedName>
</protein>
<accession>P0C316</accession>
<feature type="chain" id="PRO_0000288629" description="Cytochrome b6">
    <location>
        <begin position="1"/>
        <end position="215"/>
    </location>
</feature>
<feature type="transmembrane region" description="Helical" evidence="1">
    <location>
        <begin position="32"/>
        <end position="52"/>
    </location>
</feature>
<feature type="transmembrane region" description="Helical" evidence="1">
    <location>
        <begin position="90"/>
        <end position="110"/>
    </location>
</feature>
<feature type="transmembrane region" description="Helical" evidence="1">
    <location>
        <begin position="116"/>
        <end position="136"/>
    </location>
</feature>
<feature type="transmembrane region" description="Helical" evidence="1">
    <location>
        <begin position="186"/>
        <end position="206"/>
    </location>
</feature>
<feature type="binding site" description="covalent" evidence="1">
    <location>
        <position position="35"/>
    </location>
    <ligand>
        <name>heme c</name>
        <dbReference type="ChEBI" id="CHEBI:61717"/>
    </ligand>
</feature>
<feature type="binding site" description="axial binding residue" evidence="1">
    <location>
        <position position="86"/>
    </location>
    <ligand>
        <name>heme b</name>
        <dbReference type="ChEBI" id="CHEBI:60344"/>
        <label>2</label>
    </ligand>
    <ligandPart>
        <name>Fe</name>
        <dbReference type="ChEBI" id="CHEBI:18248"/>
    </ligandPart>
</feature>
<feature type="binding site" description="axial binding residue" evidence="1">
    <location>
        <position position="100"/>
    </location>
    <ligand>
        <name>heme b</name>
        <dbReference type="ChEBI" id="CHEBI:60344"/>
        <label>1</label>
    </ligand>
    <ligandPart>
        <name>Fe</name>
        <dbReference type="ChEBI" id="CHEBI:18248"/>
    </ligandPart>
</feature>
<feature type="binding site" description="axial binding residue" evidence="1">
    <location>
        <position position="187"/>
    </location>
    <ligand>
        <name>heme b</name>
        <dbReference type="ChEBI" id="CHEBI:60344"/>
        <label>2</label>
    </ligand>
    <ligandPart>
        <name>Fe</name>
        <dbReference type="ChEBI" id="CHEBI:18248"/>
    </ligandPart>
</feature>
<feature type="binding site" description="axial binding residue" evidence="1">
    <location>
        <position position="202"/>
    </location>
    <ligand>
        <name>heme b</name>
        <dbReference type="ChEBI" id="CHEBI:60344"/>
        <label>1</label>
    </ligand>
    <ligandPart>
        <name>Fe</name>
        <dbReference type="ChEBI" id="CHEBI:18248"/>
    </ligandPart>
</feature>
<organism>
    <name type="scientific">Oryza sativa subsp. indica</name>
    <name type="common">Rice</name>
    <dbReference type="NCBI Taxonomy" id="39946"/>
    <lineage>
        <taxon>Eukaryota</taxon>
        <taxon>Viridiplantae</taxon>
        <taxon>Streptophyta</taxon>
        <taxon>Embryophyta</taxon>
        <taxon>Tracheophyta</taxon>
        <taxon>Spermatophyta</taxon>
        <taxon>Magnoliopsida</taxon>
        <taxon>Liliopsida</taxon>
        <taxon>Poales</taxon>
        <taxon>Poaceae</taxon>
        <taxon>BOP clade</taxon>
        <taxon>Oryzoideae</taxon>
        <taxon>Oryzeae</taxon>
        <taxon>Oryzinae</taxon>
        <taxon>Oryza</taxon>
        <taxon>Oryza sativa</taxon>
    </lineage>
</organism>
<proteinExistence type="inferred from homology"/>
<evidence type="ECO:0000255" key="1">
    <source>
        <dbReference type="HAMAP-Rule" id="MF_00633"/>
    </source>
</evidence>
<sequence>MSKVYDWFEERLEIQAIADDITSKYVPPHVNIFYCLGGITLTCFLVQVATGFAMTFYYRPTVTEAFSSVQYIMTEANFGWLIRSVHRWSASMMVLMMILHVFRVYLTGGFKKPRELTWVTGVVLAVLTASFGVTGYSLPWDQIGYWAVKIVTGVPDAIPVIGSPLVELLRGSASVGQSTLTRFYSLHTFVLPLLTAVFMLMHFLMIRKQGISGPL</sequence>
<name>CYB6_ORYSI</name>
<gene>
    <name evidence="1" type="primary">petB</name>
</gene>
<geneLocation type="chloroplast"/>
<comment type="function">
    <text evidence="1">Component of the cytochrome b6-f complex, which mediates electron transfer between photosystem II (PSII) and photosystem I (PSI), cyclic electron flow around PSI, and state transitions.</text>
</comment>
<comment type="cofactor">
    <cofactor evidence="1">
        <name>heme b</name>
        <dbReference type="ChEBI" id="CHEBI:60344"/>
    </cofactor>
    <text evidence="1">Binds 2 heme b groups non-covalently with two histidine residues as axial ligands.</text>
</comment>
<comment type="cofactor">
    <cofactor evidence="1">
        <name>heme c</name>
        <dbReference type="ChEBI" id="CHEBI:61717"/>
    </cofactor>
    <text evidence="1">Binds one heme group covalently by a single cysteine link with no axial amino acid ligand. This heme was named heme ci.</text>
</comment>
<comment type="subunit">
    <text evidence="1">The 4 large subunits of the cytochrome b6-f complex are cytochrome b6, subunit IV (17 kDa polypeptide, PetD), cytochrome f and the Rieske protein, while the 4 small subunits are PetG, PetL, PetM and PetN. The complex functions as a dimer.</text>
</comment>
<comment type="subcellular location">
    <subcellularLocation>
        <location evidence="1">Plastid</location>
        <location evidence="1">Chloroplast thylakoid membrane</location>
        <topology evidence="1">Multi-pass membrane protein</topology>
    </subcellularLocation>
</comment>
<comment type="miscellaneous">
    <text evidence="1">Heme 1 (or BH or b566) is high-potential and absorbs at about 566 nm, and heme 2 (or BL or b562) is low-potential and absorbs at about 562 nm.</text>
</comment>
<comment type="similarity">
    <text evidence="1">Belongs to the cytochrome b family. PetB subfamily.</text>
</comment>